<accession>P0C221</accession>
<accession>G3V5J7</accession>
<feature type="chain" id="PRO_0000259927" description="Coiled-coil domain-containing protein 175">
    <location>
        <begin position="1"/>
        <end position="793"/>
    </location>
</feature>
<feature type="coiled-coil region" evidence="1">
    <location>
        <begin position="131"/>
        <end position="163"/>
    </location>
</feature>
<feature type="coiled-coil region" evidence="1">
    <location>
        <begin position="205"/>
        <end position="377"/>
    </location>
</feature>
<feature type="coiled-coil region" evidence="1">
    <location>
        <begin position="431"/>
        <end position="535"/>
    </location>
</feature>
<feature type="coiled-coil region" evidence="1">
    <location>
        <begin position="562"/>
        <end position="679"/>
    </location>
</feature>
<feature type="coiled-coil region" evidence="1">
    <location>
        <begin position="716"/>
        <end position="745"/>
    </location>
</feature>
<feature type="sequence variant" id="VAR_050871" description="In dbSNP:rs17834244.">
    <original>G</original>
    <variation>R</variation>
    <location>
        <position position="164"/>
    </location>
</feature>
<feature type="sequence variant" id="VAR_050872" description="In dbSNP:rs4261431.">
    <original>G</original>
    <variation>E</variation>
    <location>
        <position position="507"/>
    </location>
</feature>
<feature type="sequence variant" id="VAR_050873" description="In dbSNP:rs12887189.">
    <original>S</original>
    <variation>N</variation>
    <location>
        <position position="689"/>
    </location>
</feature>
<feature type="sequence variant" id="VAR_050874" description="In dbSNP:rs4394993.">
    <original>S</original>
    <variation>R</variation>
    <location>
        <position position="689"/>
    </location>
</feature>
<dbReference type="EMBL" id="AL121694">
    <property type="status" value="NOT_ANNOTATED_CDS"/>
    <property type="molecule type" value="Genomic_DNA"/>
</dbReference>
<dbReference type="CCDS" id="CCDS53898.1"/>
<dbReference type="RefSeq" id="NP_001157871.1">
    <property type="nucleotide sequence ID" value="NM_001164399.2"/>
</dbReference>
<dbReference type="SMR" id="P0C221"/>
<dbReference type="BioGRID" id="610063">
    <property type="interactions" value="6"/>
</dbReference>
<dbReference type="FunCoup" id="P0C221">
    <property type="interactions" value="5"/>
</dbReference>
<dbReference type="STRING" id="9606.ENSP00000453940"/>
<dbReference type="GlyGen" id="P0C221">
    <property type="glycosylation" value="1 site, 1 O-linked glycan (1 site)"/>
</dbReference>
<dbReference type="iPTMnet" id="P0C221"/>
<dbReference type="PhosphoSitePlus" id="P0C221"/>
<dbReference type="BioMuta" id="CCDC175"/>
<dbReference type="DMDM" id="117940155"/>
<dbReference type="jPOST" id="P0C221"/>
<dbReference type="MassIVE" id="P0C221"/>
<dbReference type="PaxDb" id="9606-ENSP00000453940"/>
<dbReference type="PeptideAtlas" id="P0C221"/>
<dbReference type="ProteomicsDB" id="33544"/>
<dbReference type="ProteomicsDB" id="52300"/>
<dbReference type="Antibodypedia" id="100">
    <property type="antibodies" value="8 antibodies from 7 providers"/>
</dbReference>
<dbReference type="DNASU" id="729665"/>
<dbReference type="Ensembl" id="ENST00000537690.7">
    <property type="protein sequence ID" value="ENSP00000453940.1"/>
    <property type="gene ID" value="ENSG00000151838.12"/>
</dbReference>
<dbReference type="GeneID" id="729665"/>
<dbReference type="KEGG" id="hsa:729665"/>
<dbReference type="MANE-Select" id="ENST00000537690.7">
    <property type="protein sequence ID" value="ENSP00000453940.1"/>
    <property type="RefSeq nucleotide sequence ID" value="NM_001164399.2"/>
    <property type="RefSeq protein sequence ID" value="NP_001157871.1"/>
</dbReference>
<dbReference type="UCSC" id="uc021rtw.2">
    <property type="organism name" value="human"/>
</dbReference>
<dbReference type="AGR" id="HGNC:19847"/>
<dbReference type="CTD" id="729665"/>
<dbReference type="DisGeNET" id="729665"/>
<dbReference type="GeneCards" id="CCDC175"/>
<dbReference type="HGNC" id="HGNC:19847">
    <property type="gene designation" value="CCDC175"/>
</dbReference>
<dbReference type="HPA" id="ENSG00000151838">
    <property type="expression patterns" value="Tissue enhanced (brain, choroid plexus, testis)"/>
</dbReference>
<dbReference type="neXtProt" id="NX_P0C221"/>
<dbReference type="OpenTargets" id="ENSG00000151838"/>
<dbReference type="VEuPathDB" id="HostDB:ENSG00000151838"/>
<dbReference type="eggNOG" id="ENOG502RXX0">
    <property type="taxonomic scope" value="Eukaryota"/>
</dbReference>
<dbReference type="GeneTree" id="ENSGT00390000001277"/>
<dbReference type="InParanoid" id="P0C221"/>
<dbReference type="OMA" id="VFMQKRK"/>
<dbReference type="OrthoDB" id="10031759at2759"/>
<dbReference type="PAN-GO" id="P0C221">
    <property type="GO annotations" value="0 GO annotations based on evolutionary models"/>
</dbReference>
<dbReference type="TreeFam" id="TF351236"/>
<dbReference type="PathwayCommons" id="P0C221"/>
<dbReference type="BioGRID-ORCS" id="729665">
    <property type="hits" value="12 hits in 1146 CRISPR screens"/>
</dbReference>
<dbReference type="ChiTaRS" id="CCDC175">
    <property type="organism name" value="human"/>
</dbReference>
<dbReference type="GenomeRNAi" id="729665"/>
<dbReference type="Pharos" id="P0C221">
    <property type="development level" value="Tdark"/>
</dbReference>
<dbReference type="PRO" id="PR:P0C221"/>
<dbReference type="Proteomes" id="UP000005640">
    <property type="component" value="Chromosome 14"/>
</dbReference>
<dbReference type="RNAct" id="P0C221">
    <property type="molecule type" value="protein"/>
</dbReference>
<dbReference type="Bgee" id="ENSG00000151838">
    <property type="expression patterns" value="Expressed in cerebellar cortex and 68 other cell types or tissues"/>
</dbReference>
<dbReference type="ExpressionAtlas" id="P0C221">
    <property type="expression patterns" value="baseline and differential"/>
</dbReference>
<dbReference type="InterPro" id="IPR038834">
    <property type="entry name" value="CCDC175"/>
</dbReference>
<dbReference type="PANTHER" id="PTHR35347">
    <property type="entry name" value="COILED-COIL DOMAIN-CONTAINING PROTEIN 175"/>
    <property type="match status" value="1"/>
</dbReference>
<dbReference type="PANTHER" id="PTHR35347:SF1">
    <property type="entry name" value="COILED-COIL DOMAIN-CONTAINING PROTEIN 175"/>
    <property type="match status" value="1"/>
</dbReference>
<keyword id="KW-0175">Coiled coil</keyword>
<keyword id="KW-1267">Proteomics identification</keyword>
<keyword id="KW-1185">Reference proteome</keyword>
<gene>
    <name type="primary">CCDC175</name>
    <name type="synonym">C14orf38</name>
</gene>
<reference key="1">
    <citation type="journal article" date="2003" name="Nature">
        <title>The DNA sequence and analysis of human chromosome 14.</title>
        <authorList>
            <person name="Heilig R."/>
            <person name="Eckenberg R."/>
            <person name="Petit J.-L."/>
            <person name="Fonknechten N."/>
            <person name="Da Silva C."/>
            <person name="Cattolico L."/>
            <person name="Levy M."/>
            <person name="Barbe V."/>
            <person name="De Berardinis V."/>
            <person name="Ureta-Vidal A."/>
            <person name="Pelletier E."/>
            <person name="Vico V."/>
            <person name="Anthouard V."/>
            <person name="Rowen L."/>
            <person name="Madan A."/>
            <person name="Qin S."/>
            <person name="Sun H."/>
            <person name="Du H."/>
            <person name="Pepin K."/>
            <person name="Artiguenave F."/>
            <person name="Robert C."/>
            <person name="Cruaud C."/>
            <person name="Bruels T."/>
            <person name="Jaillon O."/>
            <person name="Friedlander L."/>
            <person name="Samson G."/>
            <person name="Brottier P."/>
            <person name="Cure S."/>
            <person name="Segurens B."/>
            <person name="Aniere F."/>
            <person name="Samain S."/>
            <person name="Crespeau H."/>
            <person name="Abbasi N."/>
            <person name="Aiach N."/>
            <person name="Boscus D."/>
            <person name="Dickhoff R."/>
            <person name="Dors M."/>
            <person name="Dubois I."/>
            <person name="Friedman C."/>
            <person name="Gouyvenoux M."/>
            <person name="James R."/>
            <person name="Madan A."/>
            <person name="Mairey-Estrada B."/>
            <person name="Mangenot S."/>
            <person name="Martins N."/>
            <person name="Menard M."/>
            <person name="Oztas S."/>
            <person name="Ratcliffe A."/>
            <person name="Shaffer T."/>
            <person name="Trask B."/>
            <person name="Vacherie B."/>
            <person name="Bellemere C."/>
            <person name="Belser C."/>
            <person name="Besnard-Gonnet M."/>
            <person name="Bartol-Mavel D."/>
            <person name="Boutard M."/>
            <person name="Briez-Silla S."/>
            <person name="Combette S."/>
            <person name="Dufosse-Laurent V."/>
            <person name="Ferron C."/>
            <person name="Lechaplais C."/>
            <person name="Louesse C."/>
            <person name="Muselet D."/>
            <person name="Magdelenat G."/>
            <person name="Pateau E."/>
            <person name="Petit E."/>
            <person name="Sirvain-Trukniewicz P."/>
            <person name="Trybou A."/>
            <person name="Vega-Czarny N."/>
            <person name="Bataille E."/>
            <person name="Bluet E."/>
            <person name="Bordelais I."/>
            <person name="Dubois M."/>
            <person name="Dumont C."/>
            <person name="Guerin T."/>
            <person name="Haffray S."/>
            <person name="Hammadi R."/>
            <person name="Muanga J."/>
            <person name="Pellouin V."/>
            <person name="Robert D."/>
            <person name="Wunderle E."/>
            <person name="Gauguet G."/>
            <person name="Roy A."/>
            <person name="Sainte-Marthe L."/>
            <person name="Verdier J."/>
            <person name="Verdier-Discala C."/>
            <person name="Hillier L.W."/>
            <person name="Fulton L."/>
            <person name="McPherson J."/>
            <person name="Matsuda F."/>
            <person name="Wilson R."/>
            <person name="Scarpelli C."/>
            <person name="Gyapay G."/>
            <person name="Wincker P."/>
            <person name="Saurin W."/>
            <person name="Quetier F."/>
            <person name="Waterston R."/>
            <person name="Hood L."/>
            <person name="Weissenbach J."/>
        </authorList>
    </citation>
    <scope>NUCLEOTIDE SEQUENCE [LARGE SCALE GENOMIC DNA]</scope>
</reference>
<sequence>MALSPWTPGLGAGEKLVQAAAVSTGPSLELCTLPSTLGSSVAVEALEQLFVVEQSLQSDYFKCNEEAKIFLKDIAVAVKKLEEMRKATIDLLEIESMELNKLYYLLETLPNSIKRELEECVRDARRLNLFEINTIKMRITRTENEIELLKKKITDLTKYNEALGEKQEELARKHARFVLSLNQTMEKKATTTVYINETYTKINLKREDIALQKKCIQEAEELMEKERAEYLIRKQELTAQINEFENTREVKRMETYQKKKELDKLQTKMSKIKETVTVSAAVLSDHNLEIARLHESIRYWEQEVSELKKDLAILEAKLCFFTDNKEKLDDISNDEKNEFLNKIKQLVETLHAARMEYKDLREKMKTLARQYKIVLSEEEKAFLQKQKIHDENQKQLTFISQKEYFLSQKRVDIKNMEEGLITLQELQQATKTVYQQQIKILSANLERESQRCVITQWKMACLRKKHARWTAKIKAEIQAITEKIQNAEVRRIELLNETSFRQQEISGFVAQIEKLTTELKEEEKAFVNKEKMLMKELSKYEEIFVKETQINKEKEEELVEYLPQLQVAEQEYKEKRRKLEELSNIITAQRQEEDLLNNHIFLFTRDFSRYISNMEDVKQELQQLRDQESKKNKDHFETLKNLENGFYINDQKADLLLLENKKLKEYILYLKNNIEKYREGQEALMHTSSDLSRQLIAQEAQYKDLWAEFQTTVKILVDNGEETLQDINNLTDKLRERDEKMQHVSTWLRGSLEGLRLLVEQESPMDLLKKKKHIRTRVHFPVVKCTEKNTLTK</sequence>
<name>CC175_HUMAN</name>
<evidence type="ECO:0000255" key="1"/>
<proteinExistence type="evidence at protein level"/>
<protein>
    <recommendedName>
        <fullName>Coiled-coil domain-containing protein 175</fullName>
    </recommendedName>
</protein>
<organism>
    <name type="scientific">Homo sapiens</name>
    <name type="common">Human</name>
    <dbReference type="NCBI Taxonomy" id="9606"/>
    <lineage>
        <taxon>Eukaryota</taxon>
        <taxon>Metazoa</taxon>
        <taxon>Chordata</taxon>
        <taxon>Craniata</taxon>
        <taxon>Vertebrata</taxon>
        <taxon>Euteleostomi</taxon>
        <taxon>Mammalia</taxon>
        <taxon>Eutheria</taxon>
        <taxon>Euarchontoglires</taxon>
        <taxon>Primates</taxon>
        <taxon>Haplorrhini</taxon>
        <taxon>Catarrhini</taxon>
        <taxon>Hominidae</taxon>
        <taxon>Homo</taxon>
    </lineage>
</organism>